<name>TSAD_LISW6</name>
<sequence length="344" mass="36924">MGGLMKKNTVILGIESSCDETAASVVKNGNEIISSVVASQIESHKRFGGVVPEIASRHHVEQITLVIEEALTQANVTMDDLDGIAVTEGPGLVGALLIGVNAAKTLAFMHNLPLIGVHHIAGHIYANRFETEFKFPLLSLVVSGGHTELVLMKADNDFEIIGETRDDAAGEAYDKVARTLGLAYPGGVQIDKLAKEGEDTFHFPRAMMDDGSFDFSFSGLKSSFINTLHNLRQRGEEPNPNDMAASFQASVVDVLVSKTIRAAKKYDVKQLLLAGGVAANQGLRKRLIQEMKLELPDIELIIPPLSLCGDNAAMIAAAGTVSFLQGKRSSYDMNANPGLLLEDI</sequence>
<evidence type="ECO:0000255" key="1">
    <source>
        <dbReference type="HAMAP-Rule" id="MF_01445"/>
    </source>
</evidence>
<evidence type="ECO:0000305" key="2"/>
<gene>
    <name evidence="1" type="primary">tsaD</name>
    <name type="synonym">gcp</name>
    <name type="ordered locus">lwe2096</name>
</gene>
<accession>A0AKI2</accession>
<protein>
    <recommendedName>
        <fullName evidence="1">tRNA N6-adenosine threonylcarbamoyltransferase</fullName>
        <ecNumber evidence="1">2.3.1.234</ecNumber>
    </recommendedName>
    <alternativeName>
        <fullName evidence="1">N6-L-threonylcarbamoyladenine synthase</fullName>
        <shortName evidence="1">t(6)A synthase</shortName>
    </alternativeName>
    <alternativeName>
        <fullName evidence="1">t(6)A37 threonylcarbamoyladenosine biosynthesis protein TsaD</fullName>
    </alternativeName>
    <alternativeName>
        <fullName evidence="1">tRNA threonylcarbamoyladenosine biosynthesis protein TsaD</fullName>
    </alternativeName>
</protein>
<organism>
    <name type="scientific">Listeria welshimeri serovar 6b (strain ATCC 35897 / DSM 20650 / CCUG 15529 / CIP 8149 / NCTC 11857 / SLCC 5334 / V8)</name>
    <dbReference type="NCBI Taxonomy" id="386043"/>
    <lineage>
        <taxon>Bacteria</taxon>
        <taxon>Bacillati</taxon>
        <taxon>Bacillota</taxon>
        <taxon>Bacilli</taxon>
        <taxon>Bacillales</taxon>
        <taxon>Listeriaceae</taxon>
        <taxon>Listeria</taxon>
    </lineage>
</organism>
<reference key="1">
    <citation type="journal article" date="2006" name="J. Bacteriol.">
        <title>Whole-genome sequence of Listeria welshimeri reveals common steps in genome reduction with Listeria innocua as compared to Listeria monocytogenes.</title>
        <authorList>
            <person name="Hain T."/>
            <person name="Steinweg C."/>
            <person name="Kuenne C.T."/>
            <person name="Billion A."/>
            <person name="Ghai R."/>
            <person name="Chatterjee S.S."/>
            <person name="Domann E."/>
            <person name="Kaerst U."/>
            <person name="Goesmann A."/>
            <person name="Bekel T."/>
            <person name="Bartels D."/>
            <person name="Kaiser O."/>
            <person name="Meyer F."/>
            <person name="Puehler A."/>
            <person name="Weisshaar B."/>
            <person name="Wehland J."/>
            <person name="Liang C."/>
            <person name="Dandekar T."/>
            <person name="Lampidis R."/>
            <person name="Kreft J."/>
            <person name="Goebel W."/>
            <person name="Chakraborty T."/>
        </authorList>
    </citation>
    <scope>NUCLEOTIDE SEQUENCE [LARGE SCALE GENOMIC DNA]</scope>
    <source>
        <strain>ATCC 35897 / DSM 20650 / CCUG 15529 / CIP 8149 / NCTC 11857 / SLCC 5334 / V8</strain>
    </source>
</reference>
<feature type="chain" id="PRO_0000303415" description="tRNA N6-adenosine threonylcarbamoyltransferase">
    <location>
        <begin position="1"/>
        <end position="344"/>
    </location>
</feature>
<feature type="binding site" evidence="1">
    <location>
        <position position="119"/>
    </location>
    <ligand>
        <name>Fe cation</name>
        <dbReference type="ChEBI" id="CHEBI:24875"/>
    </ligand>
</feature>
<feature type="binding site" evidence="1">
    <location>
        <position position="123"/>
    </location>
    <ligand>
        <name>Fe cation</name>
        <dbReference type="ChEBI" id="CHEBI:24875"/>
    </ligand>
</feature>
<feature type="binding site" evidence="1">
    <location>
        <begin position="141"/>
        <end position="145"/>
    </location>
    <ligand>
        <name>substrate</name>
    </ligand>
</feature>
<feature type="binding site" evidence="1">
    <location>
        <position position="174"/>
    </location>
    <ligand>
        <name>substrate</name>
    </ligand>
</feature>
<feature type="binding site" evidence="1">
    <location>
        <position position="187"/>
    </location>
    <ligand>
        <name>substrate</name>
    </ligand>
</feature>
<feature type="binding site" evidence="1">
    <location>
        <position position="191"/>
    </location>
    <ligand>
        <name>substrate</name>
    </ligand>
</feature>
<feature type="binding site" evidence="1">
    <location>
        <position position="280"/>
    </location>
    <ligand>
        <name>substrate</name>
    </ligand>
</feature>
<feature type="binding site" evidence="1">
    <location>
        <position position="310"/>
    </location>
    <ligand>
        <name>Fe cation</name>
        <dbReference type="ChEBI" id="CHEBI:24875"/>
    </ligand>
</feature>
<dbReference type="EC" id="2.3.1.234" evidence="1"/>
<dbReference type="EMBL" id="AM263198">
    <property type="protein sequence ID" value="CAK21514.1"/>
    <property type="status" value="ALT_INIT"/>
    <property type="molecule type" value="Genomic_DNA"/>
</dbReference>
<dbReference type="RefSeq" id="WP_011702854.1">
    <property type="nucleotide sequence ID" value="NC_008555.1"/>
</dbReference>
<dbReference type="SMR" id="A0AKI2"/>
<dbReference type="STRING" id="386043.lwe2096"/>
<dbReference type="GeneID" id="61189995"/>
<dbReference type="KEGG" id="lwe:lwe2096"/>
<dbReference type="eggNOG" id="COG0533">
    <property type="taxonomic scope" value="Bacteria"/>
</dbReference>
<dbReference type="HOGENOM" id="CLU_023208_0_2_9"/>
<dbReference type="OrthoDB" id="9806197at2"/>
<dbReference type="Proteomes" id="UP000000779">
    <property type="component" value="Chromosome"/>
</dbReference>
<dbReference type="GO" id="GO:0005737">
    <property type="term" value="C:cytoplasm"/>
    <property type="evidence" value="ECO:0007669"/>
    <property type="project" value="UniProtKB-SubCell"/>
</dbReference>
<dbReference type="GO" id="GO:0005506">
    <property type="term" value="F:iron ion binding"/>
    <property type="evidence" value="ECO:0007669"/>
    <property type="project" value="UniProtKB-UniRule"/>
</dbReference>
<dbReference type="GO" id="GO:0061711">
    <property type="term" value="F:N(6)-L-threonylcarbamoyladenine synthase activity"/>
    <property type="evidence" value="ECO:0007669"/>
    <property type="project" value="UniProtKB-EC"/>
</dbReference>
<dbReference type="GO" id="GO:0002949">
    <property type="term" value="P:tRNA threonylcarbamoyladenosine modification"/>
    <property type="evidence" value="ECO:0007669"/>
    <property type="project" value="UniProtKB-UniRule"/>
</dbReference>
<dbReference type="CDD" id="cd24133">
    <property type="entry name" value="ASKHA_NBD_TsaD_bac"/>
    <property type="match status" value="1"/>
</dbReference>
<dbReference type="FunFam" id="3.30.420.40:FF:000012">
    <property type="entry name" value="tRNA N6-adenosine threonylcarbamoyltransferase"/>
    <property type="match status" value="1"/>
</dbReference>
<dbReference type="FunFam" id="3.30.420.40:FF:000040">
    <property type="entry name" value="tRNA N6-adenosine threonylcarbamoyltransferase"/>
    <property type="match status" value="1"/>
</dbReference>
<dbReference type="Gene3D" id="3.30.420.40">
    <property type="match status" value="2"/>
</dbReference>
<dbReference type="HAMAP" id="MF_01445">
    <property type="entry name" value="TsaD"/>
    <property type="match status" value="1"/>
</dbReference>
<dbReference type="InterPro" id="IPR043129">
    <property type="entry name" value="ATPase_NBD"/>
</dbReference>
<dbReference type="InterPro" id="IPR000905">
    <property type="entry name" value="Gcp-like_dom"/>
</dbReference>
<dbReference type="InterPro" id="IPR017861">
    <property type="entry name" value="KAE1/TsaD"/>
</dbReference>
<dbReference type="InterPro" id="IPR017860">
    <property type="entry name" value="Peptidase_M22_CS"/>
</dbReference>
<dbReference type="InterPro" id="IPR022450">
    <property type="entry name" value="TsaD"/>
</dbReference>
<dbReference type="NCBIfam" id="TIGR00329">
    <property type="entry name" value="gcp_kae1"/>
    <property type="match status" value="1"/>
</dbReference>
<dbReference type="NCBIfam" id="TIGR03723">
    <property type="entry name" value="T6A_TsaD_YgjD"/>
    <property type="match status" value="1"/>
</dbReference>
<dbReference type="PANTHER" id="PTHR11735">
    <property type="entry name" value="TRNA N6-ADENOSINE THREONYLCARBAMOYLTRANSFERASE"/>
    <property type="match status" value="1"/>
</dbReference>
<dbReference type="PANTHER" id="PTHR11735:SF6">
    <property type="entry name" value="TRNA N6-ADENOSINE THREONYLCARBAMOYLTRANSFERASE, MITOCHONDRIAL"/>
    <property type="match status" value="1"/>
</dbReference>
<dbReference type="Pfam" id="PF00814">
    <property type="entry name" value="TsaD"/>
    <property type="match status" value="1"/>
</dbReference>
<dbReference type="PRINTS" id="PR00789">
    <property type="entry name" value="OSIALOPTASE"/>
</dbReference>
<dbReference type="SUPFAM" id="SSF53067">
    <property type="entry name" value="Actin-like ATPase domain"/>
    <property type="match status" value="2"/>
</dbReference>
<dbReference type="PROSITE" id="PS01016">
    <property type="entry name" value="GLYCOPROTEASE"/>
    <property type="match status" value="1"/>
</dbReference>
<keyword id="KW-0012">Acyltransferase</keyword>
<keyword id="KW-0963">Cytoplasm</keyword>
<keyword id="KW-0408">Iron</keyword>
<keyword id="KW-0479">Metal-binding</keyword>
<keyword id="KW-0808">Transferase</keyword>
<keyword id="KW-0819">tRNA processing</keyword>
<comment type="function">
    <text evidence="1">Required for the formation of a threonylcarbamoyl group on adenosine at position 37 (t(6)A37) in tRNAs that read codons beginning with adenine. Is involved in the transfer of the threonylcarbamoyl moiety of threonylcarbamoyl-AMP (TC-AMP) to the N6 group of A37, together with TsaE and TsaB. TsaD likely plays a direct catalytic role in this reaction.</text>
</comment>
<comment type="catalytic activity">
    <reaction evidence="1">
        <text>L-threonylcarbamoyladenylate + adenosine(37) in tRNA = N(6)-L-threonylcarbamoyladenosine(37) in tRNA + AMP + H(+)</text>
        <dbReference type="Rhea" id="RHEA:37059"/>
        <dbReference type="Rhea" id="RHEA-COMP:10162"/>
        <dbReference type="Rhea" id="RHEA-COMP:10163"/>
        <dbReference type="ChEBI" id="CHEBI:15378"/>
        <dbReference type="ChEBI" id="CHEBI:73682"/>
        <dbReference type="ChEBI" id="CHEBI:74411"/>
        <dbReference type="ChEBI" id="CHEBI:74418"/>
        <dbReference type="ChEBI" id="CHEBI:456215"/>
        <dbReference type="EC" id="2.3.1.234"/>
    </reaction>
</comment>
<comment type="cofactor">
    <cofactor evidence="1">
        <name>Fe(2+)</name>
        <dbReference type="ChEBI" id="CHEBI:29033"/>
    </cofactor>
    <text evidence="1">Binds 1 Fe(2+) ion per subunit.</text>
</comment>
<comment type="subcellular location">
    <subcellularLocation>
        <location evidence="1">Cytoplasm</location>
    </subcellularLocation>
</comment>
<comment type="similarity">
    <text evidence="1">Belongs to the KAE1 / TsaD family.</text>
</comment>
<comment type="sequence caution" evidence="2">
    <conflict type="erroneous initiation">
        <sequence resource="EMBL-CDS" id="CAK21514"/>
    </conflict>
</comment>
<proteinExistence type="inferred from homology"/>